<keyword id="KW-0119">Carbohydrate metabolism</keyword>
<keyword id="KW-0521">NADP</keyword>
<keyword id="KW-0560">Oxidoreductase</keyword>
<protein>
    <recommendedName>
        <fullName>D/L-glyceraldehyde reductase</fullName>
        <ecNumber>1.1.1.372</ecNumber>
    </recommendedName>
</protein>
<name>GLD1_HYPJE</name>
<accession>Q0GYU5</accession>
<proteinExistence type="evidence at protein level"/>
<comment type="function">
    <text evidence="2">Mediates the conversion of L-glyceraldehyde to glycerol in D-galacturonate catabolic process. Also able to reduce D-glyceraldehyde.</text>
</comment>
<comment type="catalytic activity">
    <reaction evidence="2">
        <text>glycerol + NADP(+) = L-glyceraldehyde + NADPH + H(+)</text>
        <dbReference type="Rhea" id="RHEA:38111"/>
        <dbReference type="ChEBI" id="CHEBI:15378"/>
        <dbReference type="ChEBI" id="CHEBI:17754"/>
        <dbReference type="ChEBI" id="CHEBI:27975"/>
        <dbReference type="ChEBI" id="CHEBI:57783"/>
        <dbReference type="ChEBI" id="CHEBI:58349"/>
        <dbReference type="EC" id="1.1.1.372"/>
    </reaction>
</comment>
<comment type="catalytic activity">
    <reaction evidence="2">
        <text>glycerol + NADP(+) = D-glyceraldehyde + NADPH + H(+)</text>
        <dbReference type="Rhea" id="RHEA:23592"/>
        <dbReference type="ChEBI" id="CHEBI:15378"/>
        <dbReference type="ChEBI" id="CHEBI:17378"/>
        <dbReference type="ChEBI" id="CHEBI:17754"/>
        <dbReference type="ChEBI" id="CHEBI:57783"/>
        <dbReference type="ChEBI" id="CHEBI:58349"/>
        <dbReference type="EC" id="1.1.1.372"/>
    </reaction>
</comment>
<comment type="pathway">
    <text>Carbohydrate acid metabolism.</text>
</comment>
<comment type="similarity">
    <text evidence="3">Belongs to the aldo/keto reductase family.</text>
</comment>
<organism>
    <name type="scientific">Hypocrea jecorina</name>
    <name type="common">Trichoderma reesei</name>
    <dbReference type="NCBI Taxonomy" id="51453"/>
    <lineage>
        <taxon>Eukaryota</taxon>
        <taxon>Fungi</taxon>
        <taxon>Dikarya</taxon>
        <taxon>Ascomycota</taxon>
        <taxon>Pezizomycotina</taxon>
        <taxon>Sordariomycetes</taxon>
        <taxon>Hypocreomycetidae</taxon>
        <taxon>Hypocreales</taxon>
        <taxon>Hypocreaceae</taxon>
        <taxon>Trichoderma</taxon>
    </lineage>
</organism>
<reference key="1">
    <citation type="journal article" date="2006" name="FEBS J.">
        <title>Enzymes for the NADPH-dependent reduction of dihydroxyacetone and D-glyceraldehyde and L-glyceraldehyde in the mould Hypocrea jecorina.</title>
        <authorList>
            <person name="Liepins J."/>
            <person name="Kuorelahti S."/>
            <person name="Penttila M."/>
            <person name="Richard P."/>
        </authorList>
    </citation>
    <scope>NUCLEOTIDE SEQUENCE [GENOMIC DNA]</scope>
    <scope>FUNCTION</scope>
    <scope>CATALYTIC ACTIVITY</scope>
</reference>
<dbReference type="EC" id="1.1.1.372"/>
<dbReference type="EMBL" id="DQ422037">
    <property type="protein sequence ID" value="ABD83952.1"/>
    <property type="molecule type" value="mRNA"/>
</dbReference>
<dbReference type="SMR" id="Q0GYU5"/>
<dbReference type="OMA" id="LWNSQHH"/>
<dbReference type="BioCyc" id="MetaCyc:MONOMER-15607"/>
<dbReference type="BRENDA" id="1.1.1.372">
    <property type="organism ID" value="6451"/>
</dbReference>
<dbReference type="SABIO-RK" id="Q0GYU5"/>
<dbReference type="GO" id="GO:0047956">
    <property type="term" value="F:glycerol dehydrogenase (NADP+) activity"/>
    <property type="evidence" value="ECO:0007669"/>
    <property type="project" value="RHEA"/>
</dbReference>
<dbReference type="CDD" id="cd19118">
    <property type="entry name" value="AKR_AKR3B1-3"/>
    <property type="match status" value="1"/>
</dbReference>
<dbReference type="FunFam" id="3.20.20.100:FF:000007">
    <property type="entry name" value="NAD(P)H-dependent D-xylose reductase xyl1"/>
    <property type="match status" value="1"/>
</dbReference>
<dbReference type="Gene3D" id="3.20.20.100">
    <property type="entry name" value="NADP-dependent oxidoreductase domain"/>
    <property type="match status" value="1"/>
</dbReference>
<dbReference type="InterPro" id="IPR020471">
    <property type="entry name" value="AKR"/>
</dbReference>
<dbReference type="InterPro" id="IPR044490">
    <property type="entry name" value="AKR3B"/>
</dbReference>
<dbReference type="InterPro" id="IPR018170">
    <property type="entry name" value="Aldo/ket_reductase_CS"/>
</dbReference>
<dbReference type="InterPro" id="IPR023210">
    <property type="entry name" value="NADP_OxRdtase_dom"/>
</dbReference>
<dbReference type="InterPro" id="IPR036812">
    <property type="entry name" value="NADP_OxRdtase_dom_sf"/>
</dbReference>
<dbReference type="PANTHER" id="PTHR11732">
    <property type="entry name" value="ALDO/KETO REDUCTASE"/>
    <property type="match status" value="1"/>
</dbReference>
<dbReference type="Pfam" id="PF00248">
    <property type="entry name" value="Aldo_ket_red"/>
    <property type="match status" value="1"/>
</dbReference>
<dbReference type="PIRSF" id="PIRSF000097">
    <property type="entry name" value="AKR"/>
    <property type="match status" value="1"/>
</dbReference>
<dbReference type="PRINTS" id="PR00069">
    <property type="entry name" value="ALDKETRDTASE"/>
</dbReference>
<dbReference type="SUPFAM" id="SSF51430">
    <property type="entry name" value="NAD(P)-linked oxidoreductase"/>
    <property type="match status" value="1"/>
</dbReference>
<dbReference type="PROSITE" id="PS00798">
    <property type="entry name" value="ALDOKETO_REDUCTASE_1"/>
    <property type="match status" value="1"/>
</dbReference>
<evidence type="ECO:0000250" key="1"/>
<evidence type="ECO:0000269" key="2">
    <source>
    </source>
</evidence>
<evidence type="ECO:0000305" key="3"/>
<feature type="chain" id="PRO_0000425567" description="D/L-glyceraldehyde reductase">
    <location>
        <begin position="1"/>
        <end position="331"/>
    </location>
</feature>
<feature type="active site" description="Proton donor" evidence="1">
    <location>
        <position position="51"/>
    </location>
</feature>
<feature type="binding site" evidence="1">
    <location>
        <position position="114"/>
    </location>
    <ligand>
        <name>substrate</name>
    </ligand>
</feature>
<feature type="binding site" evidence="1">
    <location>
        <begin position="213"/>
        <end position="276"/>
    </location>
    <ligand>
        <name>NADP(+)</name>
        <dbReference type="ChEBI" id="CHEBI:58349"/>
    </ligand>
</feature>
<gene>
    <name type="primary">gld1</name>
</gene>
<sequence>MSSGRTVTLNTGYKIPQIGYGTWQAAPGEVGAGVFEALKVGYRHLDLAKVYGNQKEVGEGIKKALAEVPGLKREDIFITSKLWNNSHKPEDVEPALDDTLAELGLDYLDLYLIHWPVAFAPGADLFPKSEDGSEVQLNQNVSIVQTWKAMTELPKSKVRSVGVSNFTIEHLDAVIEATGVVPAVNQIERHPRLPNQPLIDYCAKKGIIITAYSAFGNNTKGLPLLVSSDEVKAVADNLSKKQGKTVTPAQVILAWSQIGGHTVIPKSVTKARIAENFQEVELDDEAIAALNKLGEKPQRFNIPYTYKPRWNINLFNTEEEKAAAHTAVIKL</sequence>